<dbReference type="EMBL" id="CP000680">
    <property type="protein sequence ID" value="ABP83434.1"/>
    <property type="molecule type" value="Genomic_DNA"/>
</dbReference>
<dbReference type="SMR" id="A4XQ18"/>
<dbReference type="STRING" id="399739.Pmen_0666"/>
<dbReference type="KEGG" id="pmy:Pmen_0666"/>
<dbReference type="PATRIC" id="fig|399739.8.peg.673"/>
<dbReference type="eggNOG" id="COG2371">
    <property type="taxonomic scope" value="Bacteria"/>
</dbReference>
<dbReference type="HOGENOM" id="CLU_093757_2_0_6"/>
<dbReference type="OrthoDB" id="5421304at2"/>
<dbReference type="GO" id="GO:0005737">
    <property type="term" value="C:cytoplasm"/>
    <property type="evidence" value="ECO:0007669"/>
    <property type="project" value="UniProtKB-SubCell"/>
</dbReference>
<dbReference type="GO" id="GO:0016151">
    <property type="term" value="F:nickel cation binding"/>
    <property type="evidence" value="ECO:0007669"/>
    <property type="project" value="UniProtKB-UniRule"/>
</dbReference>
<dbReference type="GO" id="GO:0051082">
    <property type="term" value="F:unfolded protein binding"/>
    <property type="evidence" value="ECO:0007669"/>
    <property type="project" value="UniProtKB-UniRule"/>
</dbReference>
<dbReference type="GO" id="GO:0006457">
    <property type="term" value="P:protein folding"/>
    <property type="evidence" value="ECO:0007669"/>
    <property type="project" value="InterPro"/>
</dbReference>
<dbReference type="GO" id="GO:0065003">
    <property type="term" value="P:protein-containing complex assembly"/>
    <property type="evidence" value="ECO:0007669"/>
    <property type="project" value="InterPro"/>
</dbReference>
<dbReference type="GO" id="GO:0019627">
    <property type="term" value="P:urea metabolic process"/>
    <property type="evidence" value="ECO:0007669"/>
    <property type="project" value="InterPro"/>
</dbReference>
<dbReference type="CDD" id="cd00571">
    <property type="entry name" value="UreE"/>
    <property type="match status" value="1"/>
</dbReference>
<dbReference type="Gene3D" id="2.60.260.20">
    <property type="entry name" value="Urease metallochaperone UreE, N-terminal domain"/>
    <property type="match status" value="1"/>
</dbReference>
<dbReference type="Gene3D" id="3.30.70.790">
    <property type="entry name" value="UreE, C-terminal domain"/>
    <property type="match status" value="1"/>
</dbReference>
<dbReference type="HAMAP" id="MF_00822">
    <property type="entry name" value="UreE"/>
    <property type="match status" value="1"/>
</dbReference>
<dbReference type="InterPro" id="IPR012406">
    <property type="entry name" value="UreE"/>
</dbReference>
<dbReference type="InterPro" id="IPR007864">
    <property type="entry name" value="UreE_C_dom"/>
</dbReference>
<dbReference type="InterPro" id="IPR004029">
    <property type="entry name" value="UreE_N"/>
</dbReference>
<dbReference type="InterPro" id="IPR036118">
    <property type="entry name" value="UreE_N_sf"/>
</dbReference>
<dbReference type="NCBIfam" id="NF009751">
    <property type="entry name" value="PRK13261.1-1"/>
    <property type="match status" value="1"/>
</dbReference>
<dbReference type="NCBIfam" id="NF009753">
    <property type="entry name" value="PRK13261.1-5"/>
    <property type="match status" value="1"/>
</dbReference>
<dbReference type="Pfam" id="PF05194">
    <property type="entry name" value="UreE_C"/>
    <property type="match status" value="1"/>
</dbReference>
<dbReference type="Pfam" id="PF02814">
    <property type="entry name" value="UreE_N"/>
    <property type="match status" value="1"/>
</dbReference>
<dbReference type="PIRSF" id="PIRSF036402">
    <property type="entry name" value="Ureas_acces_UreE"/>
    <property type="match status" value="1"/>
</dbReference>
<dbReference type="SMART" id="SM00988">
    <property type="entry name" value="UreE_N"/>
    <property type="match status" value="1"/>
</dbReference>
<dbReference type="SUPFAM" id="SSF69737">
    <property type="entry name" value="Urease metallochaperone UreE, C-terminal domain"/>
    <property type="match status" value="1"/>
</dbReference>
<dbReference type="SUPFAM" id="SSF69287">
    <property type="entry name" value="Urease metallochaperone UreE, N-terminal domain"/>
    <property type="match status" value="1"/>
</dbReference>
<evidence type="ECO:0000255" key="1">
    <source>
        <dbReference type="HAMAP-Rule" id="MF_00822"/>
    </source>
</evidence>
<evidence type="ECO:0000256" key="2">
    <source>
        <dbReference type="SAM" id="MobiDB-lite"/>
    </source>
</evidence>
<feature type="chain" id="PRO_1000062556" description="Urease accessory protein UreE">
    <location>
        <begin position="1"/>
        <end position="166"/>
    </location>
</feature>
<feature type="region of interest" description="Disordered" evidence="2">
    <location>
        <begin position="135"/>
        <end position="156"/>
    </location>
</feature>
<protein>
    <recommendedName>
        <fullName evidence="1">Urease accessory protein UreE</fullName>
    </recommendedName>
</protein>
<accession>A4XQ18</accession>
<reference key="1">
    <citation type="submission" date="2007-04" db="EMBL/GenBank/DDBJ databases">
        <title>Complete sequence of Pseudomonas mendocina ymp.</title>
        <authorList>
            <consortium name="US DOE Joint Genome Institute"/>
            <person name="Copeland A."/>
            <person name="Lucas S."/>
            <person name="Lapidus A."/>
            <person name="Barry K."/>
            <person name="Glavina del Rio T."/>
            <person name="Dalin E."/>
            <person name="Tice H."/>
            <person name="Pitluck S."/>
            <person name="Kiss H."/>
            <person name="Brettin T."/>
            <person name="Detter J.C."/>
            <person name="Bruce D."/>
            <person name="Han C."/>
            <person name="Schmutz J."/>
            <person name="Larimer F."/>
            <person name="Land M."/>
            <person name="Hauser L."/>
            <person name="Kyrpides N."/>
            <person name="Mikhailova N."/>
            <person name="Hersman L."/>
            <person name="Dubois J."/>
            <person name="Maurice P."/>
            <person name="Richardson P."/>
        </authorList>
    </citation>
    <scope>NUCLEOTIDE SEQUENCE [LARGE SCALE GENOMIC DNA]</scope>
    <source>
        <strain>ymp</strain>
    </source>
</reference>
<proteinExistence type="inferred from homology"/>
<comment type="function">
    <text evidence="1">Involved in urease metallocenter assembly. Binds nickel. Probably functions as a nickel donor during metallocenter assembly.</text>
</comment>
<comment type="subcellular location">
    <subcellularLocation>
        <location evidence="1">Cytoplasm</location>
    </subcellularLocation>
</comment>
<comment type="similarity">
    <text evidence="1">Belongs to the UreE family.</text>
</comment>
<name>UREE_ECTM1</name>
<sequence length="166" mass="18488">MLVIHTRIAPQAAADAELELTFEARRKSRLRCFTTAGEEVGLFLERGQPALADGEFLQAKDGRIVRVRAKAEPLLHVTCASPFELMRAAYHLGNRHVALQLGDGWLRLPDDYVLKAMLEQLGATVEAVQAPYQPEQGAYGGGHHHSHHGDEEFNYGPRLHQFGVRK</sequence>
<organism>
    <name type="scientific">Ectopseudomonas mendocina (strain ymp)</name>
    <name type="common">Pseudomonas mendocina</name>
    <dbReference type="NCBI Taxonomy" id="399739"/>
    <lineage>
        <taxon>Bacteria</taxon>
        <taxon>Pseudomonadati</taxon>
        <taxon>Pseudomonadota</taxon>
        <taxon>Gammaproteobacteria</taxon>
        <taxon>Pseudomonadales</taxon>
        <taxon>Pseudomonadaceae</taxon>
        <taxon>Ectopseudomonas</taxon>
    </lineage>
</organism>
<keyword id="KW-0143">Chaperone</keyword>
<keyword id="KW-0963">Cytoplasm</keyword>
<keyword id="KW-0533">Nickel</keyword>
<keyword id="KW-0996">Nickel insertion</keyword>
<gene>
    <name evidence="1" type="primary">ureE</name>
    <name type="ordered locus">Pmen_0666</name>
</gene>